<comment type="function">
    <text evidence="1">DNA-dependent RNA polymerase catalyzes the transcription of DNA into RNA using the four ribonucleoside triphosphates as substrates.</text>
</comment>
<comment type="catalytic activity">
    <reaction evidence="1">
        <text>RNA(n) + a ribonucleoside 5'-triphosphate = RNA(n+1) + diphosphate</text>
        <dbReference type="Rhea" id="RHEA:21248"/>
        <dbReference type="Rhea" id="RHEA-COMP:14527"/>
        <dbReference type="Rhea" id="RHEA-COMP:17342"/>
        <dbReference type="ChEBI" id="CHEBI:33019"/>
        <dbReference type="ChEBI" id="CHEBI:61557"/>
        <dbReference type="ChEBI" id="CHEBI:140395"/>
        <dbReference type="EC" id="2.7.7.6"/>
    </reaction>
</comment>
<comment type="cofactor">
    <cofactor evidence="1">
        <name>Mg(2+)</name>
        <dbReference type="ChEBI" id="CHEBI:18420"/>
    </cofactor>
    <text evidence="1">Binds 1 Mg(2+) ion per subunit.</text>
</comment>
<comment type="cofactor">
    <cofactor evidence="1">
        <name>Zn(2+)</name>
        <dbReference type="ChEBI" id="CHEBI:29105"/>
    </cofactor>
    <text evidence="1">Binds 2 Zn(2+) ions per subunit.</text>
</comment>
<comment type="subunit">
    <text evidence="1">The RNAP catalytic core consists of 2 alpha, 1 beta, 1 beta' and 1 omega subunit. When a sigma factor is associated with the core the holoenzyme is formed, which can initiate transcription.</text>
</comment>
<comment type="similarity">
    <text evidence="1">Belongs to the RNA polymerase beta' chain family.</text>
</comment>
<feature type="chain" id="PRO_0000067808" description="DNA-directed RNA polymerase subunit beta'">
    <location>
        <begin position="1"/>
        <end position="1225"/>
    </location>
</feature>
<feature type="binding site" evidence="1">
    <location>
        <position position="60"/>
    </location>
    <ligand>
        <name>Zn(2+)</name>
        <dbReference type="ChEBI" id="CHEBI:29105"/>
        <label>1</label>
    </ligand>
</feature>
<feature type="binding site" evidence="1">
    <location>
        <position position="62"/>
    </location>
    <ligand>
        <name>Zn(2+)</name>
        <dbReference type="ChEBI" id="CHEBI:29105"/>
        <label>1</label>
    </ligand>
</feature>
<feature type="binding site" evidence="1">
    <location>
        <position position="75"/>
    </location>
    <ligand>
        <name>Zn(2+)</name>
        <dbReference type="ChEBI" id="CHEBI:29105"/>
        <label>1</label>
    </ligand>
</feature>
<feature type="binding site" evidence="1">
    <location>
        <position position="78"/>
    </location>
    <ligand>
        <name>Zn(2+)</name>
        <dbReference type="ChEBI" id="CHEBI:29105"/>
        <label>1</label>
    </ligand>
</feature>
<feature type="binding site" evidence="1">
    <location>
        <position position="450"/>
    </location>
    <ligand>
        <name>Mg(2+)</name>
        <dbReference type="ChEBI" id="CHEBI:18420"/>
    </ligand>
</feature>
<feature type="binding site" evidence="1">
    <location>
        <position position="452"/>
    </location>
    <ligand>
        <name>Mg(2+)</name>
        <dbReference type="ChEBI" id="CHEBI:18420"/>
    </ligand>
</feature>
<feature type="binding site" evidence="1">
    <location>
        <position position="454"/>
    </location>
    <ligand>
        <name>Mg(2+)</name>
        <dbReference type="ChEBI" id="CHEBI:18420"/>
    </ligand>
</feature>
<feature type="binding site" evidence="1">
    <location>
        <position position="818"/>
    </location>
    <ligand>
        <name>Zn(2+)</name>
        <dbReference type="ChEBI" id="CHEBI:29105"/>
        <label>2</label>
    </ligand>
</feature>
<feature type="binding site" evidence="1">
    <location>
        <position position="892"/>
    </location>
    <ligand>
        <name>Zn(2+)</name>
        <dbReference type="ChEBI" id="CHEBI:29105"/>
        <label>2</label>
    </ligand>
</feature>
<feature type="binding site" evidence="1">
    <location>
        <position position="899"/>
    </location>
    <ligand>
        <name>Zn(2+)</name>
        <dbReference type="ChEBI" id="CHEBI:29105"/>
        <label>2</label>
    </ligand>
</feature>
<feature type="binding site" evidence="1">
    <location>
        <position position="902"/>
    </location>
    <ligand>
        <name>Zn(2+)</name>
        <dbReference type="ChEBI" id="CHEBI:29105"/>
        <label>2</label>
    </ligand>
</feature>
<sequence>MVDVNRFKSMQITLASPSKVRSWSYGEVKKPETINYRTLKPEREGLFDEVIFGPTKDWECACGKYKRIRYRGIVCDRCGVEVTRTKVRRERMGHIELKAPVSHIWYFKGIPSRMGLTLDMSPRALEEVIYFAAYVVIDPKDTPLEHKSIMTEREYRERLREYGYGSFVAKMGAEAIQDLLKQVDLEKEIAELKEELKTATGQKRVKAIRRLDVLDAFYKSGNKPEWMILNILPVIPPDLRPMLQLDGGRFASSDLNDLYRRVINRNNRLARLLELNAPGIIVQNEKRMLQEAVDALIDNGRRGRPITGPGSRPLKSLSHMLKGKQGRFRQNLLGKRVDFSGRSVIAVGPTLKMYQCGVPREMAIELFKPFVMREIVARDIVQNVKAAKRLVERGDERIWDILEEVIKEHPVLLNRAPTLHRLGIQAFEPVLIDGKALRLHPLVCEAYNADFDGDQMAIHVPLSEEAQAEARILMLAAEHILNPKDGKPVVTPSQDMVLGNYYLTMEEAGREGEGMVFKDRDEAVMAYRNGYVHLHSRVGIATDSLNKPWTEEQRHKVLLTTVGKILFNDIMPEGLPYLQEPNNANLTEGVPAKYFLPLGGDIKEAISNLELNPPFKKKNLGNIIAEIFKRFRTTETSALLDRMKNLGYHHSTLAGLTVGIADIPVVDDKAEIIEESHKRVEQITKQFRRGMITDDERYNAVTAEWRAAREKLEKRLIANQDPKNPIVMMMDSGARGNISNFSQLAGMRGLMAAPNGRIMELPILSNFREGLSVLEMFFSTHGARKGMTDTALKTADSGYLTRRLVDVAQDVIIREDDCGTDRGLLIRSIAEGKEMIESLEERLNGRYTKKTVKHPETGAVIIGPNELITEDKAREIVNAGVEEVTIRSVFTCNTRHGVCRHCYGINLATGDAVEVGEAVGTIAAQSIGEPGTQLTMRTFHTGGVASNTDITQGLPRVQEIFEARNPKGEAVITEVKGQVTAIEEDASTRTKKVFVKGETGEGEYVVPFTARMRVEVGGQVARGAALTEGSIQPKRLLAVRDVLSVETYLLGEVQKVYRSQGVEIGDKHIEVMVRQMIRKVRVMDPGDTDLLMGTLMDINDFTDANKDVLIAGGVPATGRPVLMGITKASLETNSFLSAASFQETTRVLTDAAIRGKKDHLLGLKENVIIGKIIPAGTGMARYRNLEPHAVNEEEYLNPPVEEEGNEETTEVVVDTAVETVEETVE</sequence>
<reference key="1">
    <citation type="journal article" date="2001" name="Science">
        <title>Complete genome sequence of a virulent isolate of Streptococcus pneumoniae.</title>
        <authorList>
            <person name="Tettelin H."/>
            <person name="Nelson K.E."/>
            <person name="Paulsen I.T."/>
            <person name="Eisen J.A."/>
            <person name="Read T.D."/>
            <person name="Peterson S.N."/>
            <person name="Heidelberg J.F."/>
            <person name="DeBoy R.T."/>
            <person name="Haft D.H."/>
            <person name="Dodson R.J."/>
            <person name="Durkin A.S."/>
            <person name="Gwinn M.L."/>
            <person name="Kolonay J.F."/>
            <person name="Nelson W.C."/>
            <person name="Peterson J.D."/>
            <person name="Umayam L.A."/>
            <person name="White O."/>
            <person name="Salzberg S.L."/>
            <person name="Lewis M.R."/>
            <person name="Radune D."/>
            <person name="Holtzapple E.K."/>
            <person name="Khouri H.M."/>
            <person name="Wolf A.M."/>
            <person name="Utterback T.R."/>
            <person name="Hansen C.L."/>
            <person name="McDonald L.A."/>
            <person name="Feldblyum T.V."/>
            <person name="Angiuoli S.V."/>
            <person name="Dickinson T."/>
            <person name="Hickey E.K."/>
            <person name="Holt I.E."/>
            <person name="Loftus B.J."/>
            <person name="Yang F."/>
            <person name="Smith H.O."/>
            <person name="Venter J.C."/>
            <person name="Dougherty B.A."/>
            <person name="Morrison D.A."/>
            <person name="Hollingshead S.K."/>
            <person name="Fraser C.M."/>
        </authorList>
    </citation>
    <scope>NUCLEOTIDE SEQUENCE [LARGE SCALE GENOMIC DNA]</scope>
    <source>
        <strain>ATCC BAA-334 / TIGR4</strain>
    </source>
</reference>
<dbReference type="EC" id="2.7.7.6" evidence="1"/>
<dbReference type="EMBL" id="AE005672">
    <property type="protein sequence ID" value="AAK76027.1"/>
    <property type="molecule type" value="Genomic_DNA"/>
</dbReference>
<dbReference type="PIR" id="B95229">
    <property type="entry name" value="B95229"/>
</dbReference>
<dbReference type="RefSeq" id="WP_000228766.1">
    <property type="nucleotide sequence ID" value="NZ_CP155539.1"/>
</dbReference>
<dbReference type="SMR" id="Q97NQ8"/>
<dbReference type="PaxDb" id="170187-SP_1960"/>
<dbReference type="EnsemblBacteria" id="AAK76027">
    <property type="protein sequence ID" value="AAK76027"/>
    <property type="gene ID" value="SP_1960"/>
</dbReference>
<dbReference type="KEGG" id="spn:SP_1960"/>
<dbReference type="eggNOG" id="COG0086">
    <property type="taxonomic scope" value="Bacteria"/>
</dbReference>
<dbReference type="PhylomeDB" id="Q97NQ8"/>
<dbReference type="Proteomes" id="UP000000585">
    <property type="component" value="Chromosome"/>
</dbReference>
<dbReference type="GO" id="GO:0000428">
    <property type="term" value="C:DNA-directed RNA polymerase complex"/>
    <property type="evidence" value="ECO:0007669"/>
    <property type="project" value="UniProtKB-KW"/>
</dbReference>
<dbReference type="GO" id="GO:0003677">
    <property type="term" value="F:DNA binding"/>
    <property type="evidence" value="ECO:0007669"/>
    <property type="project" value="UniProtKB-UniRule"/>
</dbReference>
<dbReference type="GO" id="GO:0003899">
    <property type="term" value="F:DNA-directed RNA polymerase activity"/>
    <property type="evidence" value="ECO:0007669"/>
    <property type="project" value="UniProtKB-UniRule"/>
</dbReference>
<dbReference type="GO" id="GO:0000287">
    <property type="term" value="F:magnesium ion binding"/>
    <property type="evidence" value="ECO:0007669"/>
    <property type="project" value="UniProtKB-UniRule"/>
</dbReference>
<dbReference type="GO" id="GO:0008270">
    <property type="term" value="F:zinc ion binding"/>
    <property type="evidence" value="ECO:0007669"/>
    <property type="project" value="UniProtKB-UniRule"/>
</dbReference>
<dbReference type="GO" id="GO:0006351">
    <property type="term" value="P:DNA-templated transcription"/>
    <property type="evidence" value="ECO:0007669"/>
    <property type="project" value="UniProtKB-UniRule"/>
</dbReference>
<dbReference type="CDD" id="cd02655">
    <property type="entry name" value="RNAP_beta'_C"/>
    <property type="match status" value="1"/>
</dbReference>
<dbReference type="CDD" id="cd01609">
    <property type="entry name" value="RNAP_beta'_N"/>
    <property type="match status" value="1"/>
</dbReference>
<dbReference type="FunFam" id="1.10.150.390:FF:000002">
    <property type="entry name" value="DNA-directed RNA polymerase subunit beta"/>
    <property type="match status" value="1"/>
</dbReference>
<dbReference type="FunFam" id="4.10.860.120:FF:000001">
    <property type="entry name" value="DNA-directed RNA polymerase subunit beta"/>
    <property type="match status" value="1"/>
</dbReference>
<dbReference type="Gene3D" id="1.10.132.30">
    <property type="match status" value="1"/>
</dbReference>
<dbReference type="Gene3D" id="1.10.150.390">
    <property type="match status" value="1"/>
</dbReference>
<dbReference type="Gene3D" id="1.10.1790.20">
    <property type="match status" value="1"/>
</dbReference>
<dbReference type="Gene3D" id="1.10.40.90">
    <property type="match status" value="1"/>
</dbReference>
<dbReference type="Gene3D" id="2.40.40.20">
    <property type="match status" value="1"/>
</dbReference>
<dbReference type="Gene3D" id="2.40.50.100">
    <property type="match status" value="1"/>
</dbReference>
<dbReference type="Gene3D" id="4.10.860.120">
    <property type="entry name" value="RNA polymerase II, clamp domain"/>
    <property type="match status" value="1"/>
</dbReference>
<dbReference type="Gene3D" id="1.10.274.100">
    <property type="entry name" value="RNA polymerase Rpb1, domain 3"/>
    <property type="match status" value="1"/>
</dbReference>
<dbReference type="HAMAP" id="MF_01322">
    <property type="entry name" value="RNApol_bact_RpoC"/>
    <property type="match status" value="1"/>
</dbReference>
<dbReference type="InterPro" id="IPR045867">
    <property type="entry name" value="DNA-dir_RpoC_beta_prime"/>
</dbReference>
<dbReference type="InterPro" id="IPR012754">
    <property type="entry name" value="DNA-dir_RpoC_beta_prime_bact"/>
</dbReference>
<dbReference type="InterPro" id="IPR000722">
    <property type="entry name" value="RNA_pol_asu"/>
</dbReference>
<dbReference type="InterPro" id="IPR006592">
    <property type="entry name" value="RNA_pol_N"/>
</dbReference>
<dbReference type="InterPro" id="IPR007080">
    <property type="entry name" value="RNA_pol_Rpb1_1"/>
</dbReference>
<dbReference type="InterPro" id="IPR007066">
    <property type="entry name" value="RNA_pol_Rpb1_3"/>
</dbReference>
<dbReference type="InterPro" id="IPR042102">
    <property type="entry name" value="RNA_pol_Rpb1_3_sf"/>
</dbReference>
<dbReference type="InterPro" id="IPR007083">
    <property type="entry name" value="RNA_pol_Rpb1_4"/>
</dbReference>
<dbReference type="InterPro" id="IPR007081">
    <property type="entry name" value="RNA_pol_Rpb1_5"/>
</dbReference>
<dbReference type="InterPro" id="IPR044893">
    <property type="entry name" value="RNA_pol_Rpb1_clamp_domain"/>
</dbReference>
<dbReference type="InterPro" id="IPR038120">
    <property type="entry name" value="Rpb1_funnel_sf"/>
</dbReference>
<dbReference type="NCBIfam" id="TIGR02386">
    <property type="entry name" value="rpoC_TIGR"/>
    <property type="match status" value="1"/>
</dbReference>
<dbReference type="PANTHER" id="PTHR19376">
    <property type="entry name" value="DNA-DIRECTED RNA POLYMERASE"/>
    <property type="match status" value="1"/>
</dbReference>
<dbReference type="PANTHER" id="PTHR19376:SF54">
    <property type="entry name" value="DNA-DIRECTED RNA POLYMERASE SUBUNIT BETA"/>
    <property type="match status" value="1"/>
</dbReference>
<dbReference type="Pfam" id="PF04997">
    <property type="entry name" value="RNA_pol_Rpb1_1"/>
    <property type="match status" value="1"/>
</dbReference>
<dbReference type="Pfam" id="PF00623">
    <property type="entry name" value="RNA_pol_Rpb1_2"/>
    <property type="match status" value="2"/>
</dbReference>
<dbReference type="Pfam" id="PF04983">
    <property type="entry name" value="RNA_pol_Rpb1_3"/>
    <property type="match status" value="1"/>
</dbReference>
<dbReference type="Pfam" id="PF05000">
    <property type="entry name" value="RNA_pol_Rpb1_4"/>
    <property type="match status" value="1"/>
</dbReference>
<dbReference type="Pfam" id="PF04998">
    <property type="entry name" value="RNA_pol_Rpb1_5"/>
    <property type="match status" value="1"/>
</dbReference>
<dbReference type="SMART" id="SM00663">
    <property type="entry name" value="RPOLA_N"/>
    <property type="match status" value="1"/>
</dbReference>
<dbReference type="SUPFAM" id="SSF64484">
    <property type="entry name" value="beta and beta-prime subunits of DNA dependent RNA-polymerase"/>
    <property type="match status" value="1"/>
</dbReference>
<keyword id="KW-0240">DNA-directed RNA polymerase</keyword>
<keyword id="KW-0460">Magnesium</keyword>
<keyword id="KW-0479">Metal-binding</keyword>
<keyword id="KW-0548">Nucleotidyltransferase</keyword>
<keyword id="KW-1185">Reference proteome</keyword>
<keyword id="KW-0804">Transcription</keyword>
<keyword id="KW-0808">Transferase</keyword>
<keyword id="KW-0862">Zinc</keyword>
<accession>Q97NQ8</accession>
<organism>
    <name type="scientific">Streptococcus pneumoniae serotype 4 (strain ATCC BAA-334 / TIGR4)</name>
    <dbReference type="NCBI Taxonomy" id="170187"/>
    <lineage>
        <taxon>Bacteria</taxon>
        <taxon>Bacillati</taxon>
        <taxon>Bacillota</taxon>
        <taxon>Bacilli</taxon>
        <taxon>Lactobacillales</taxon>
        <taxon>Streptococcaceae</taxon>
        <taxon>Streptococcus</taxon>
    </lineage>
</organism>
<name>RPOC_STRPN</name>
<gene>
    <name evidence="1" type="primary">rpoC</name>
    <name type="ordered locus">SP_1960</name>
</gene>
<protein>
    <recommendedName>
        <fullName evidence="1">DNA-directed RNA polymerase subunit beta'</fullName>
        <shortName evidence="1">RNAP subunit beta'</shortName>
        <ecNumber evidence="1">2.7.7.6</ecNumber>
    </recommendedName>
    <alternativeName>
        <fullName evidence="1">RNA polymerase subunit beta'</fullName>
    </alternativeName>
    <alternativeName>
        <fullName evidence="1">Transcriptase subunit beta'</fullName>
    </alternativeName>
</protein>
<evidence type="ECO:0000255" key="1">
    <source>
        <dbReference type="HAMAP-Rule" id="MF_01322"/>
    </source>
</evidence>
<proteinExistence type="inferred from homology"/>